<proteinExistence type="inferred from homology"/>
<feature type="chain" id="PRO_0000257082" description="Probable transcriptional regulatory protein MHP7448_0474">
    <location>
        <begin position="1"/>
        <end position="242"/>
    </location>
</feature>
<evidence type="ECO:0000255" key="1">
    <source>
        <dbReference type="HAMAP-Rule" id="MF_00693"/>
    </source>
</evidence>
<gene>
    <name type="ordered locus">MHP7448_0474</name>
</gene>
<organism>
    <name type="scientific">Mesomycoplasma hyopneumoniae (strain 7448)</name>
    <name type="common">Mycoplasma hyopneumoniae</name>
    <dbReference type="NCBI Taxonomy" id="262722"/>
    <lineage>
        <taxon>Bacteria</taxon>
        <taxon>Bacillati</taxon>
        <taxon>Mycoplasmatota</taxon>
        <taxon>Mycoplasmoidales</taxon>
        <taxon>Metamycoplasmataceae</taxon>
        <taxon>Mesomycoplasma</taxon>
    </lineage>
</organism>
<keyword id="KW-0963">Cytoplasm</keyword>
<keyword id="KW-0238">DNA-binding</keyword>
<keyword id="KW-0804">Transcription</keyword>
<keyword id="KW-0805">Transcription regulation</keyword>
<comment type="subcellular location">
    <subcellularLocation>
        <location evidence="1">Cytoplasm</location>
    </subcellularLocation>
</comment>
<comment type="similarity">
    <text evidence="1">Belongs to the TACO1 family.</text>
</comment>
<sequence length="242" mass="27353">MAGHSKWANIKHRKGAQDALKAKIFNKFSKEIMVAVAKGGSDPNSNPALRLIISKARAKSMPKSNIEKAIAKGEGSTSNGENFKEIIYSGTLSHGISVIVVILTDNINRAIASLQALFRRANGQIGKQNSIPYLFEQKGYLEIEKNNLDEDDLMLFCLDNGAEDFQSDGENYMIYCQPRKISELKNEIEKKFSPNFRAVEISYFPNEWVELDQENTEKILNQIDNFLDDEDIQNVYHNLKFA</sequence>
<protein>
    <recommendedName>
        <fullName evidence="1">Probable transcriptional regulatory protein MHP7448_0474</fullName>
    </recommendedName>
</protein>
<accession>Q4A7P8</accession>
<name>Y474_MESH7</name>
<dbReference type="EMBL" id="AE017244">
    <property type="protein sequence ID" value="AAZ53841.1"/>
    <property type="molecule type" value="Genomic_DNA"/>
</dbReference>
<dbReference type="RefSeq" id="WP_011290285.1">
    <property type="nucleotide sequence ID" value="NC_007332.1"/>
</dbReference>
<dbReference type="SMR" id="Q4A7P8"/>
<dbReference type="KEGG" id="mhp:MHP7448_0474"/>
<dbReference type="HOGENOM" id="CLU_062974_2_2_14"/>
<dbReference type="Proteomes" id="UP000000553">
    <property type="component" value="Chromosome"/>
</dbReference>
<dbReference type="GO" id="GO:0005829">
    <property type="term" value="C:cytosol"/>
    <property type="evidence" value="ECO:0007669"/>
    <property type="project" value="TreeGrafter"/>
</dbReference>
<dbReference type="GO" id="GO:0003677">
    <property type="term" value="F:DNA binding"/>
    <property type="evidence" value="ECO:0007669"/>
    <property type="project" value="UniProtKB-UniRule"/>
</dbReference>
<dbReference type="GO" id="GO:0006355">
    <property type="term" value="P:regulation of DNA-templated transcription"/>
    <property type="evidence" value="ECO:0007669"/>
    <property type="project" value="UniProtKB-UniRule"/>
</dbReference>
<dbReference type="FunFam" id="1.10.10.200:FF:000002">
    <property type="entry name" value="Probable transcriptional regulatory protein CLM62_37755"/>
    <property type="match status" value="1"/>
</dbReference>
<dbReference type="Gene3D" id="1.10.10.200">
    <property type="match status" value="1"/>
</dbReference>
<dbReference type="Gene3D" id="3.30.70.980">
    <property type="match status" value="2"/>
</dbReference>
<dbReference type="HAMAP" id="MF_00693">
    <property type="entry name" value="Transcrip_reg_TACO1"/>
    <property type="match status" value="1"/>
</dbReference>
<dbReference type="InterPro" id="IPR017856">
    <property type="entry name" value="Integrase-like_N"/>
</dbReference>
<dbReference type="InterPro" id="IPR048300">
    <property type="entry name" value="TACO1_YebC-like_2nd/3rd_dom"/>
</dbReference>
<dbReference type="InterPro" id="IPR049083">
    <property type="entry name" value="TACO1_YebC_N"/>
</dbReference>
<dbReference type="InterPro" id="IPR002876">
    <property type="entry name" value="Transcrip_reg_TACO1-like"/>
</dbReference>
<dbReference type="InterPro" id="IPR026564">
    <property type="entry name" value="Transcrip_reg_TACO1-like_dom3"/>
</dbReference>
<dbReference type="InterPro" id="IPR029072">
    <property type="entry name" value="YebC-like"/>
</dbReference>
<dbReference type="NCBIfam" id="NF001030">
    <property type="entry name" value="PRK00110.1"/>
    <property type="match status" value="1"/>
</dbReference>
<dbReference type="NCBIfam" id="NF009044">
    <property type="entry name" value="PRK12378.1"/>
    <property type="match status" value="1"/>
</dbReference>
<dbReference type="NCBIfam" id="TIGR01033">
    <property type="entry name" value="YebC/PmpR family DNA-binding transcriptional regulator"/>
    <property type="match status" value="1"/>
</dbReference>
<dbReference type="PANTHER" id="PTHR12532:SF6">
    <property type="entry name" value="TRANSCRIPTIONAL REGULATORY PROTEIN YEBC-RELATED"/>
    <property type="match status" value="1"/>
</dbReference>
<dbReference type="PANTHER" id="PTHR12532">
    <property type="entry name" value="TRANSLATIONAL ACTIVATOR OF CYTOCHROME C OXIDASE 1"/>
    <property type="match status" value="1"/>
</dbReference>
<dbReference type="Pfam" id="PF20772">
    <property type="entry name" value="TACO1_YebC_N"/>
    <property type="match status" value="1"/>
</dbReference>
<dbReference type="Pfam" id="PF01709">
    <property type="entry name" value="Transcrip_reg"/>
    <property type="match status" value="1"/>
</dbReference>
<dbReference type="SUPFAM" id="SSF75625">
    <property type="entry name" value="YebC-like"/>
    <property type="match status" value="1"/>
</dbReference>
<reference key="1">
    <citation type="journal article" date="2005" name="J. Bacteriol.">
        <title>Swine and poultry pathogens: the complete genome sequences of two strains of Mycoplasma hyopneumoniae and a strain of Mycoplasma synoviae.</title>
        <authorList>
            <person name="Vasconcelos A.T.R."/>
            <person name="Ferreira H.B."/>
            <person name="Bizarro C.V."/>
            <person name="Bonatto S.L."/>
            <person name="Carvalho M.O."/>
            <person name="Pinto P.M."/>
            <person name="Almeida D.F."/>
            <person name="Almeida L.G.P."/>
            <person name="Almeida R."/>
            <person name="Alves-Junior L."/>
            <person name="Assuncao E.N."/>
            <person name="Azevedo V.A.C."/>
            <person name="Bogo M.R."/>
            <person name="Brigido M.M."/>
            <person name="Brocchi M."/>
            <person name="Burity H.A."/>
            <person name="Camargo A.A."/>
            <person name="Camargo S.S."/>
            <person name="Carepo M.S."/>
            <person name="Carraro D.M."/>
            <person name="de Mattos Cascardo J.C."/>
            <person name="Castro L.A."/>
            <person name="Cavalcanti G."/>
            <person name="Chemale G."/>
            <person name="Collevatti R.G."/>
            <person name="Cunha C.W."/>
            <person name="Dallagiovanna B."/>
            <person name="Dambros B.P."/>
            <person name="Dellagostin O.A."/>
            <person name="Falcao C."/>
            <person name="Fantinatti-Garboggini F."/>
            <person name="Felipe M.S.S."/>
            <person name="Fiorentin L."/>
            <person name="Franco G.R."/>
            <person name="Freitas N.S.A."/>
            <person name="Frias D."/>
            <person name="Grangeiro T.B."/>
            <person name="Grisard E.C."/>
            <person name="Guimaraes C.T."/>
            <person name="Hungria M."/>
            <person name="Jardim S.N."/>
            <person name="Krieger M.A."/>
            <person name="Laurino J.P."/>
            <person name="Lima L.F.A."/>
            <person name="Lopes M.I."/>
            <person name="Loreto E.L.S."/>
            <person name="Madeira H.M.F."/>
            <person name="Manfio G.P."/>
            <person name="Maranhao A.Q."/>
            <person name="Martinkovics C.T."/>
            <person name="Medeiros S.R.B."/>
            <person name="Moreira M.A.M."/>
            <person name="Neiva M."/>
            <person name="Ramalho-Neto C.E."/>
            <person name="Nicolas M.F."/>
            <person name="Oliveira S.C."/>
            <person name="Paixao R.F.C."/>
            <person name="Pedrosa F.O."/>
            <person name="Pena S.D.J."/>
            <person name="Pereira M."/>
            <person name="Pereira-Ferrari L."/>
            <person name="Piffer I."/>
            <person name="Pinto L.S."/>
            <person name="Potrich D.P."/>
            <person name="Salim A.C.M."/>
            <person name="Santos F.R."/>
            <person name="Schmitt R."/>
            <person name="Schneider M.P.C."/>
            <person name="Schrank A."/>
            <person name="Schrank I.S."/>
            <person name="Schuck A.F."/>
            <person name="Seuanez H.N."/>
            <person name="Silva D.W."/>
            <person name="Silva R."/>
            <person name="Silva S.C."/>
            <person name="Soares C.M.A."/>
            <person name="Souza K.R.L."/>
            <person name="Souza R.C."/>
            <person name="Staats C.C."/>
            <person name="Steffens M.B.R."/>
            <person name="Teixeira S.M.R."/>
            <person name="Urmenyi T.P."/>
            <person name="Vainstein M.H."/>
            <person name="Zuccherato L.W."/>
            <person name="Simpson A.J.G."/>
            <person name="Zaha A."/>
        </authorList>
    </citation>
    <scope>NUCLEOTIDE SEQUENCE [LARGE SCALE GENOMIC DNA]</scope>
    <source>
        <strain>7448</strain>
    </source>
</reference>